<feature type="chain" id="PRO_0000258014" description="Centrosomal protein of 290 kDa">
    <location>
        <begin position="1"/>
        <end position="2439"/>
    </location>
</feature>
<feature type="region of interest" description="Disordered" evidence="5">
    <location>
        <begin position="1802"/>
        <end position="1824"/>
    </location>
</feature>
<feature type="region of interest" description="Disordered" evidence="5">
    <location>
        <begin position="1867"/>
        <end position="1890"/>
    </location>
</feature>
<feature type="region of interest" description="Disordered" evidence="5">
    <location>
        <begin position="2017"/>
        <end position="2048"/>
    </location>
</feature>
<feature type="coiled-coil region" evidence="4">
    <location>
        <begin position="75"/>
        <end position="913"/>
    </location>
</feature>
<feature type="coiled-coil region" evidence="4">
    <location>
        <begin position="1271"/>
        <end position="1576"/>
    </location>
</feature>
<feature type="coiled-coil region" evidence="4">
    <location>
        <begin position="2046"/>
        <end position="2394"/>
    </location>
</feature>
<feature type="compositionally biased region" description="Basic and acidic residues" evidence="5">
    <location>
        <begin position="2039"/>
        <end position="2048"/>
    </location>
</feature>
<comment type="function">
    <text evidence="2 3 6">Involved in early and late steps in cilia formation. May play a role in early ciliogenesis in the disappearance of centriolar satellites and in the transition of primary ciliar vesicles (PCVs) to capped ciliary vesicles (CCVs). In the ciliary transition zone is part of the tectonic-like complex which is required for tissue-specific ciliogenesis and may regulate ciliary membrane composition. Involved in regulation of the BBSome complex integrity and in ciliary targeting of selected BBSome cargos. Required for the correct localization of ciliary and phototransduction proteins in retinal photoreceptor cells; may play a role in ciliary transport processes (By similarity). Involved in development of the nervous system and kidney (PubMed:16682973).</text>
</comment>
<comment type="subunit">
    <text evidence="1">Part of the tectonic-like complex (also named B9 complex).</text>
</comment>
<comment type="subcellular location">
    <subcellularLocation>
        <location evidence="1">Cytoplasm</location>
        <location evidence="1">Cytoskeleton</location>
        <location evidence="1">Microtubule organizing center</location>
        <location evidence="1">Centrosome</location>
    </subcellularLocation>
    <subcellularLocation>
        <location evidence="1">Cytoplasm</location>
        <location evidence="1">Cytoskeleton</location>
        <location evidence="1">Microtubule organizing center</location>
        <location evidence="1">Centrosome</location>
        <location evidence="1">Centriolar satellite</location>
    </subcellularLocation>
    <subcellularLocation>
        <location evidence="1">Nucleus</location>
    </subcellularLocation>
    <subcellularLocation>
        <location evidence="1">Cytoplasm</location>
        <location evidence="1">Cytoskeleton</location>
        <location evidence="1">Cilium basal body</location>
    </subcellularLocation>
    <text evidence="1">Localizes at the transition zone, a region between the basal body and the ciliary axoneme.</text>
</comment>
<comment type="developmental stage">
    <text evidence="6">At 24 hours post-fertilization (hpf), expressed in the tail in a rostral-to-caudal gradient and more weakly expressed in the cerebellum and retina. At 48 hpf, strongly expressed at the boundary between the developing cerebellum and tectum and in the retina.</text>
</comment>
<comment type="disruption phenotype">
    <text evidence="6">Morpholino knockdown of the protein causes defects in retinal, cerebellar and otic cavity development and cyst formation in pronephric kidney tubules.</text>
</comment>
<sequence length="2439" mass="283434">MPAAADWRLLMGMDPEDLGDEDEKICDLILMVKPRDLKADDSEKMIQLFRISQTLLRMKLDEIKCAYEVVDSAGAEQARIENELKAKVLKLESELEMAQRVMGGGDKHFLRDEIRQLESHLERKEKEVTQLEKEMGKERKSNEELALRAEEAEEKNRKLKREIKQLTRKNEQLQQDIEFYRKEAEQRESLQTKEESNEIQRRLTKANQQLYQCMEELQHAEDMAANLRSENEHLQKNLEESVKEMEKMTDEYNKMKIAVQQTDAIMDQLRKDRDHAKLQVRELTDQIQARVEEDDPVMAAVNAKVEEWKSVLSGKDLEILEYQQMIRDLREKLRTAQMDSDKSNIIALQQAVQERDNQIKMLSEQVEQYTTEMERNAMLIEELKRPLKKDKGHSSDHQRRLEDLSAKLQVAERKVLEAQRAAQLAERDARDKDKELNDTLSRIRLYESGTDGLEAAISEIKECKNQIRVRDREIEGMIKEINQLEMKINNLLDENEDLRERLGLNPKEELDLSEFRRSKILKQRQYKAENQVLLKEIERLEEERLELKQRIRALVKDKGVTVVSNSLLDNSVEEKPVRSLRPSSGSTDDEIKRKNERLQKELSNKEKELELRRSESAQFKAKLNEMLNENKQLEQGMKEILQAIQDTQKKTPTSTGVSIPSLERLVNALEMKYSEGKFDASLHLRTQVDQLTGRNEELRLEMKTAREEAANTLSQLTKANEKIARLESEMESMSKSTGSSIPHKTLALPEEMTPTSAEAINALNEYTVQLLQEIKNKGDSIEQLGSALEEYKRKFAVIRHQQGLLYKEHQSERESWQKERDSFAELKSKLEEQREVDAVKIKEYNHLLETLEKDPSEIRREMAETGRKIVVLRVNEKCLTRRYTTLLELEQHLRKENAKLKEDFTQMQAVVTERIGYLQRFKEMAAFKMASLQKSLDVSVPASELERANKQYTELTIKYRNLLQKDNHLVQKTTSLEHLETENMSLRERIDSINKELEISKEKLHTLEQAFENISTTGGEIIMDKATKAVANSEIVSVSRRITTLEMKELNERQRAEHAQKMYEHLRNSLKQVEERNFELETKFAELTKLNLEAQRIERELRDELADSVSKHISDADRKRITELEKTEANLRIEVSKLREVSDVAKMQVSALDARQQSREKEVESLRRQVLDYQAESDEKALIAKLHQHIVALQLSETTAISRLEATNTRLQKLEAQKLRDEQKLDEQQQALWHARQEGHQRARHLRHTIQALRRQFSGALPLAQQEKFSNTMLHLQEDRARVREDAQIAEEERRKAEGKAQELELKLKGLEELIATLKDAKGAQKVSEWHKKLEDVRLLEMRQSRELNTQREEIKYLKNCVAEQECTISGLEEELVQQNNLLEERQLIWDQREVQLERQLDSYEKQQNEVLNTAQKFEEATGSLPDPNQPLANQLDYALGKIKEHVRTILETKTTCKILEEKLKEKEAALWSSEQNVLSRDKVINELRLRLPAAAEREKLLADLSKQEDSESQPTLKVAHQTINNLQGRLDQKEEVLKKYQNLLGKARQEQEEIAKRHEEEVRALHQKLDVYMDTSLDRFKQTALELIKKPTITVPTSKHLVRLAEMEQTVAEQDNSLSSLSQKLKIVTQELDQQRQVTAAQAMEHAADMARLEDKHAAQMKGLSQEAEELRAQLIQMEKELHYLRTELEAQKEANVRSPSNTMKNLVERLKNQLALKEKQLKALSKALLELRAELTSQAEQQIITNAAQKEEALNVQQIVDKQTKELRACVRDLNEELQLAKDGVRAAKARENSLKEDLETLNKDLQRSQKSQNKLQSEKEALEEHLNELKKKIQRLSSGLQAQVESDGPTVDSLQKKIRKLEHELDRKSISEPADKRSTLKEDKSSKEEVVRWEEGKKWQARVDKMRNVLKEKEREVDSQAKQLATMKELYSRLEQEKVSLQKKLKGRGVTADQVVGARTLEADKEIEELHKRNAELEQQIKVMKQQQALPRDAAMEDITIRNRYLEERLYSMESRLSKEPPSRPSTSGRGSDTPSQREHEFQKENLRLSTENLELRFQLEQANKDLPRLKDQVSDLKEMCSVLKKEKAEVEKRLSHLRGSGRSGKTIPELEKTIGLMKKVVEKVQRENENLKKTSEVNVQEQLATLERDHEKLKSEYEKLKGKQEEQLNSRLESKTKGIEKIMMENERLRKEIKKEAEAAEKLRVAKASLEVANEKLKAELEETHQRLLLAQSKGATLLGVDSKTWKSSVVTRLFENKMKGLESDIAKKNISISELKVQLKEANEKLQATQHTVIQLKEQVELLKNVPVEATTDEGLAREYQSVRLANKQLEREKAQLLRQIQRNEVQLGTNKDGPGYTELQEQIKAANNEKKKLQDEVRKLTQELKHFDPTFFEELEDLKFNYNLEVKKNIVLEEQLKKLSDQFGVAIPDVSIN</sequence>
<evidence type="ECO:0000250" key="1"/>
<evidence type="ECO:0000250" key="2">
    <source>
        <dbReference type="UniProtKB" id="O15078"/>
    </source>
</evidence>
<evidence type="ECO:0000250" key="3">
    <source>
        <dbReference type="UniProtKB" id="Q6A078"/>
    </source>
</evidence>
<evidence type="ECO:0000255" key="4"/>
<evidence type="ECO:0000256" key="5">
    <source>
        <dbReference type="SAM" id="MobiDB-lite"/>
    </source>
</evidence>
<evidence type="ECO:0000269" key="6">
    <source>
    </source>
</evidence>
<evidence type="ECO:0000305" key="7"/>
<dbReference type="EMBL" id="BX901919">
    <property type="status" value="NOT_ANNOTATED_CDS"/>
    <property type="molecule type" value="Genomic_DNA"/>
</dbReference>
<dbReference type="SMR" id="P85001"/>
<dbReference type="FunCoup" id="P85001">
    <property type="interactions" value="804"/>
</dbReference>
<dbReference type="STRING" id="7955.ENSDARP00000124972"/>
<dbReference type="PaxDb" id="7955-ENSDARP00000124972"/>
<dbReference type="eggNOG" id="ENOG502QPTZ">
    <property type="taxonomic scope" value="Eukaryota"/>
</dbReference>
<dbReference type="InParanoid" id="P85001"/>
<dbReference type="PhylomeDB" id="P85001"/>
<dbReference type="Reactome" id="R-DRE-6798695">
    <property type="pathway name" value="Neutrophil degranulation"/>
</dbReference>
<dbReference type="PRO" id="PR:P85001"/>
<dbReference type="Proteomes" id="UP000000437">
    <property type="component" value="Unplaced"/>
</dbReference>
<dbReference type="GO" id="GO:0042995">
    <property type="term" value="C:cell projection"/>
    <property type="evidence" value="ECO:0007669"/>
    <property type="project" value="UniProtKB-KW"/>
</dbReference>
<dbReference type="GO" id="GO:0034451">
    <property type="term" value="C:centriolar satellite"/>
    <property type="evidence" value="ECO:0000250"/>
    <property type="project" value="UniProtKB"/>
</dbReference>
<dbReference type="GO" id="GO:0005813">
    <property type="term" value="C:centrosome"/>
    <property type="evidence" value="ECO:0000250"/>
    <property type="project" value="UniProtKB"/>
</dbReference>
<dbReference type="GO" id="GO:0005737">
    <property type="term" value="C:cytoplasm"/>
    <property type="evidence" value="ECO:0007669"/>
    <property type="project" value="UniProtKB-KW"/>
</dbReference>
<dbReference type="GO" id="GO:0005634">
    <property type="term" value="C:nucleus"/>
    <property type="evidence" value="ECO:0000250"/>
    <property type="project" value="UniProtKB"/>
</dbReference>
<dbReference type="GO" id="GO:0030030">
    <property type="term" value="P:cell projection organization"/>
    <property type="evidence" value="ECO:0007669"/>
    <property type="project" value="UniProtKB-KW"/>
</dbReference>
<dbReference type="GO" id="GO:0042462">
    <property type="term" value="P:eye photoreceptor cell development"/>
    <property type="evidence" value="ECO:0000315"/>
    <property type="project" value="HGNC-UCL"/>
</dbReference>
<dbReference type="GO" id="GO:0030902">
    <property type="term" value="P:hindbrain development"/>
    <property type="evidence" value="ECO:0000315"/>
    <property type="project" value="HGNC-UCL"/>
</dbReference>
<dbReference type="GO" id="GO:0030916">
    <property type="term" value="P:otic vesicle formation"/>
    <property type="evidence" value="ECO:0000315"/>
    <property type="project" value="HGNC-UCL"/>
</dbReference>
<dbReference type="GO" id="GO:0090316">
    <property type="term" value="P:positive regulation of intracellular protein transport"/>
    <property type="evidence" value="ECO:0000250"/>
    <property type="project" value="UniProtKB"/>
</dbReference>
<dbReference type="GO" id="GO:0048793">
    <property type="term" value="P:pronephros development"/>
    <property type="evidence" value="ECO:0000315"/>
    <property type="project" value="HGNC-UCL"/>
</dbReference>
<dbReference type="GO" id="GO:0015031">
    <property type="term" value="P:protein transport"/>
    <property type="evidence" value="ECO:0000250"/>
    <property type="project" value="UniProtKB"/>
</dbReference>
<dbReference type="InterPro" id="IPR032321">
    <property type="entry name" value="Cep209_CC5"/>
</dbReference>
<dbReference type="InterPro" id="IPR026201">
    <property type="entry name" value="Cep290"/>
</dbReference>
<dbReference type="PANTHER" id="PTHR18879">
    <property type="entry name" value="CENTROSOMAL PROTEIN OF 290 KDA"/>
    <property type="match status" value="1"/>
</dbReference>
<dbReference type="PANTHER" id="PTHR18879:SF20">
    <property type="entry name" value="CENTROSOMAL PROTEIN OF 290 KDA"/>
    <property type="match status" value="1"/>
</dbReference>
<dbReference type="Pfam" id="PF16574">
    <property type="entry name" value="CEP209_CC5"/>
    <property type="match status" value="1"/>
</dbReference>
<organism>
    <name type="scientific">Danio rerio</name>
    <name type="common">Zebrafish</name>
    <name type="synonym">Brachydanio rerio</name>
    <dbReference type="NCBI Taxonomy" id="7955"/>
    <lineage>
        <taxon>Eukaryota</taxon>
        <taxon>Metazoa</taxon>
        <taxon>Chordata</taxon>
        <taxon>Craniata</taxon>
        <taxon>Vertebrata</taxon>
        <taxon>Euteleostomi</taxon>
        <taxon>Actinopterygii</taxon>
        <taxon>Neopterygii</taxon>
        <taxon>Teleostei</taxon>
        <taxon>Ostariophysi</taxon>
        <taxon>Cypriniformes</taxon>
        <taxon>Danionidae</taxon>
        <taxon>Danioninae</taxon>
        <taxon>Danio</taxon>
    </lineage>
</organism>
<proteinExistence type="evidence at transcript level"/>
<keyword id="KW-0966">Cell projection</keyword>
<keyword id="KW-0970">Cilium biogenesis/degradation</keyword>
<keyword id="KW-0175">Coiled coil</keyword>
<keyword id="KW-0963">Cytoplasm</keyword>
<keyword id="KW-0206">Cytoskeleton</keyword>
<keyword id="KW-0217">Developmental protein</keyword>
<keyword id="KW-0539">Nucleus</keyword>
<keyword id="KW-0653">Protein transport</keyword>
<keyword id="KW-1185">Reference proteome</keyword>
<keyword id="KW-0813">Transport</keyword>
<protein>
    <recommendedName>
        <fullName>Centrosomal protein of 290 kDa</fullName>
        <shortName>Cep290</shortName>
    </recommendedName>
</protein>
<accession>P85001</accession>
<reference key="1">
    <citation type="journal article" date="2013" name="Nature">
        <title>The zebrafish reference genome sequence and its relationship to the human genome.</title>
        <authorList>
            <person name="Howe K."/>
            <person name="Clark M.D."/>
            <person name="Torroja C.F."/>
            <person name="Torrance J."/>
            <person name="Berthelot C."/>
            <person name="Muffato M."/>
            <person name="Collins J.E."/>
            <person name="Humphray S."/>
            <person name="McLaren K."/>
            <person name="Matthews L."/>
            <person name="McLaren S."/>
            <person name="Sealy I."/>
            <person name="Caccamo M."/>
            <person name="Churcher C."/>
            <person name="Scott C."/>
            <person name="Barrett J.C."/>
            <person name="Koch R."/>
            <person name="Rauch G.J."/>
            <person name="White S."/>
            <person name="Chow W."/>
            <person name="Kilian B."/>
            <person name="Quintais L.T."/>
            <person name="Guerra-Assuncao J.A."/>
            <person name="Zhou Y."/>
            <person name="Gu Y."/>
            <person name="Yen J."/>
            <person name="Vogel J.H."/>
            <person name="Eyre T."/>
            <person name="Redmond S."/>
            <person name="Banerjee R."/>
            <person name="Chi J."/>
            <person name="Fu B."/>
            <person name="Langley E."/>
            <person name="Maguire S.F."/>
            <person name="Laird G.K."/>
            <person name="Lloyd D."/>
            <person name="Kenyon E."/>
            <person name="Donaldson S."/>
            <person name="Sehra H."/>
            <person name="Almeida-King J."/>
            <person name="Loveland J."/>
            <person name="Trevanion S."/>
            <person name="Jones M."/>
            <person name="Quail M."/>
            <person name="Willey D."/>
            <person name="Hunt A."/>
            <person name="Burton J."/>
            <person name="Sims S."/>
            <person name="McLay K."/>
            <person name="Plumb B."/>
            <person name="Davis J."/>
            <person name="Clee C."/>
            <person name="Oliver K."/>
            <person name="Clark R."/>
            <person name="Riddle C."/>
            <person name="Elliot D."/>
            <person name="Threadgold G."/>
            <person name="Harden G."/>
            <person name="Ware D."/>
            <person name="Begum S."/>
            <person name="Mortimore B."/>
            <person name="Kerry G."/>
            <person name="Heath P."/>
            <person name="Phillimore B."/>
            <person name="Tracey A."/>
            <person name="Corby N."/>
            <person name="Dunn M."/>
            <person name="Johnson C."/>
            <person name="Wood J."/>
            <person name="Clark S."/>
            <person name="Pelan S."/>
            <person name="Griffiths G."/>
            <person name="Smith M."/>
            <person name="Glithero R."/>
            <person name="Howden P."/>
            <person name="Barker N."/>
            <person name="Lloyd C."/>
            <person name="Stevens C."/>
            <person name="Harley J."/>
            <person name="Holt K."/>
            <person name="Panagiotidis G."/>
            <person name="Lovell J."/>
            <person name="Beasley H."/>
            <person name="Henderson C."/>
            <person name="Gordon D."/>
            <person name="Auger K."/>
            <person name="Wright D."/>
            <person name="Collins J."/>
            <person name="Raisen C."/>
            <person name="Dyer L."/>
            <person name="Leung K."/>
            <person name="Robertson L."/>
            <person name="Ambridge K."/>
            <person name="Leongamornlert D."/>
            <person name="McGuire S."/>
            <person name="Gilderthorp R."/>
            <person name="Griffiths C."/>
            <person name="Manthravadi D."/>
            <person name="Nichol S."/>
            <person name="Barker G."/>
            <person name="Whitehead S."/>
            <person name="Kay M."/>
            <person name="Brown J."/>
            <person name="Murnane C."/>
            <person name="Gray E."/>
            <person name="Humphries M."/>
            <person name="Sycamore N."/>
            <person name="Barker D."/>
            <person name="Saunders D."/>
            <person name="Wallis J."/>
            <person name="Babbage A."/>
            <person name="Hammond S."/>
            <person name="Mashreghi-Mohammadi M."/>
            <person name="Barr L."/>
            <person name="Martin S."/>
            <person name="Wray P."/>
            <person name="Ellington A."/>
            <person name="Matthews N."/>
            <person name="Ellwood M."/>
            <person name="Woodmansey R."/>
            <person name="Clark G."/>
            <person name="Cooper J."/>
            <person name="Tromans A."/>
            <person name="Grafham D."/>
            <person name="Skuce C."/>
            <person name="Pandian R."/>
            <person name="Andrews R."/>
            <person name="Harrison E."/>
            <person name="Kimberley A."/>
            <person name="Garnett J."/>
            <person name="Fosker N."/>
            <person name="Hall R."/>
            <person name="Garner P."/>
            <person name="Kelly D."/>
            <person name="Bird C."/>
            <person name="Palmer S."/>
            <person name="Gehring I."/>
            <person name="Berger A."/>
            <person name="Dooley C.M."/>
            <person name="Ersan-Urun Z."/>
            <person name="Eser C."/>
            <person name="Geiger H."/>
            <person name="Geisler M."/>
            <person name="Karotki L."/>
            <person name="Kirn A."/>
            <person name="Konantz J."/>
            <person name="Konantz M."/>
            <person name="Oberlander M."/>
            <person name="Rudolph-Geiger S."/>
            <person name="Teucke M."/>
            <person name="Lanz C."/>
            <person name="Raddatz G."/>
            <person name="Osoegawa K."/>
            <person name="Zhu B."/>
            <person name="Rapp A."/>
            <person name="Widaa S."/>
            <person name="Langford C."/>
            <person name="Yang F."/>
            <person name="Schuster S.C."/>
            <person name="Carter N.P."/>
            <person name="Harrow J."/>
            <person name="Ning Z."/>
            <person name="Herrero J."/>
            <person name="Searle S.M."/>
            <person name="Enright A."/>
            <person name="Geisler R."/>
            <person name="Plasterk R.H."/>
            <person name="Lee C."/>
            <person name="Westerfield M."/>
            <person name="de Jong P.J."/>
            <person name="Zon L.I."/>
            <person name="Postlethwait J.H."/>
            <person name="Nusslein-Volhard C."/>
            <person name="Hubbard T.J."/>
            <person name="Roest Crollius H."/>
            <person name="Rogers J."/>
            <person name="Stemple D.L."/>
        </authorList>
    </citation>
    <scope>NUCLEOTIDE SEQUENCE [LARGE SCALE GENOMIC DNA]</scope>
    <source>
        <strain>Tuebingen</strain>
    </source>
</reference>
<reference evidence="7" key="2">
    <citation type="journal article" date="2006" name="Nat. Genet.">
        <title>The centrosomal protein nephrocystin-6 is mutated in Joubert syndrome and activates transcription factor ATF4.</title>
        <authorList>
            <person name="Sayer J.A."/>
            <person name="Otto E.A."/>
            <person name="O'toole J.F."/>
            <person name="Nurnberg G."/>
            <person name="Kennedy M.A."/>
            <person name="Becker C."/>
            <person name="Hennies H.C."/>
            <person name="Helou J."/>
            <person name="Attanasio M."/>
            <person name="Fausett B.V."/>
            <person name="Utsch B."/>
            <person name="Khanna H."/>
            <person name="Liu Y."/>
            <person name="Drummond I."/>
            <person name="Kawakami I."/>
            <person name="Kusakabe T."/>
            <person name="Tsuda M."/>
            <person name="Ma L."/>
            <person name="Lee H."/>
            <person name="Larson R.G."/>
            <person name="Allen S.J."/>
            <person name="Wilkinson C.J."/>
            <person name="Nigg E.A."/>
            <person name="Shou C."/>
            <person name="Lillo C."/>
            <person name="Williams D.S."/>
            <person name="Hoppe B."/>
            <person name="Kemper M.J."/>
            <person name="Neuhaus T."/>
            <person name="Parisi M.A."/>
            <person name="Glass I.A."/>
            <person name="Petry M."/>
            <person name="Kispert A."/>
            <person name="Gloy J."/>
            <person name="Ganner A."/>
            <person name="Walz G."/>
            <person name="Zhu X."/>
            <person name="Goldman D."/>
            <person name="Nurnberg P."/>
            <person name="Swaroop A."/>
            <person name="Leroux M.R."/>
            <person name="Hildebrandt F."/>
        </authorList>
    </citation>
    <scope>FUNCTION</scope>
    <scope>DEVELOPMENTAL STAGE</scope>
    <scope>DISRUPTION PHENOTYPE</scope>
</reference>
<gene>
    <name type="primary">cep290</name>
    <name type="ORF">im:7145703</name>
</gene>
<name>CE290_DANRE</name>